<name>MATK_GAUPR</name>
<geneLocation type="chloroplast"/>
<gene>
    <name evidence="1" type="primary">matK</name>
</gene>
<reference key="1">
    <citation type="journal article" date="2001" name="Syst. Bot.">
        <title>An analysis of the phylogenetic relationships in the Wintergreen group (Diplycosia, Gaultheria, Pernettya, Tepuia: Ericaceae).</title>
        <authorList>
            <person name="Powell E.A."/>
            <person name="Kron K.A."/>
        </authorList>
        <dbReference type="AGRICOLA" id="IND23288181"/>
    </citation>
    <scope>NUCLEOTIDE SEQUENCE [GENOMIC DNA]</scope>
</reference>
<organism>
    <name type="scientific">Gaultheria procumbens</name>
    <name type="common">Wintergreen</name>
    <name type="synonym">Eastern teaberry</name>
    <dbReference type="NCBI Taxonomy" id="157519"/>
    <lineage>
        <taxon>Eukaryota</taxon>
        <taxon>Viridiplantae</taxon>
        <taxon>Streptophyta</taxon>
        <taxon>Embryophyta</taxon>
        <taxon>Tracheophyta</taxon>
        <taxon>Spermatophyta</taxon>
        <taxon>Magnoliopsida</taxon>
        <taxon>eudicotyledons</taxon>
        <taxon>Gunneridae</taxon>
        <taxon>Pentapetalae</taxon>
        <taxon>asterids</taxon>
        <taxon>Ericales</taxon>
        <taxon>Ericaceae</taxon>
        <taxon>Vaccinioideae</taxon>
        <taxon>Gaultherieae</taxon>
        <taxon>Gaultheria</taxon>
    </lineage>
</organism>
<sequence>MEEFKRYLELDRXQQHDFIYPLIFQEYIYALAHDRGLNKSIFFENADYDNKSSLLIVKRLITHLITQMYQQNHFFFYTNDFNPNKFLGYNTNLYSQMIFEGFVVVVEIPFYLRLLSFLEGKDREXLIXLXSLHSIFPFLEDKFSHLNYILDILIPHPVHLEILXQTLRYWVKDPSSLHLLXFFLHEYSNWNSLITPKKYSSSFSKRNQKFFLFLYNFHVCEYESIFVFLRNQSSHLCSISFETFLERILFYKKIELEIFVKDFKAILWVFKDPLLHYVRYRGKSILASKGSSLLMDKWKYYVVNFWECYFYIWAQPRRIHINQLSNNSLDFLGYLSSIRLKPSMVRSQMIENSFLIENASKKFDTLVPITPMIESLSKAKFCNVLGQPMSKPVWGGLSDSDIIERFGRIYRNLSHYYSGSLKKITLYRIKYILRLSCARTLARKHKSTVRSFLKRLGVGLLEEFFTEEEQVFYLTFPKASSTSRKLYQRRIWYLDIFCINDTANHE</sequence>
<comment type="function">
    <text evidence="1">Usually encoded in the trnK tRNA gene intron. Probably assists in splicing its own and other chloroplast group II introns.</text>
</comment>
<comment type="subcellular location">
    <subcellularLocation>
        <location>Plastid</location>
        <location>Chloroplast</location>
    </subcellularLocation>
</comment>
<comment type="similarity">
    <text evidence="1">Belongs to the intron maturase 2 family. MatK subfamily.</text>
</comment>
<feature type="chain" id="PRO_0000143397" description="Maturase K">
    <location>
        <begin position="1"/>
        <end position="506"/>
    </location>
</feature>
<proteinExistence type="inferred from homology"/>
<protein>
    <recommendedName>
        <fullName evidence="1">Maturase K</fullName>
    </recommendedName>
    <alternativeName>
        <fullName evidence="1">Intron maturase</fullName>
    </alternativeName>
</protein>
<dbReference type="EMBL" id="AF366643">
    <property type="protein sequence ID" value="AAK51821.1"/>
    <property type="molecule type" value="Genomic_DNA"/>
</dbReference>
<dbReference type="GO" id="GO:0009507">
    <property type="term" value="C:chloroplast"/>
    <property type="evidence" value="ECO:0007669"/>
    <property type="project" value="UniProtKB-SubCell"/>
</dbReference>
<dbReference type="GO" id="GO:0003723">
    <property type="term" value="F:RNA binding"/>
    <property type="evidence" value="ECO:0007669"/>
    <property type="project" value="UniProtKB-KW"/>
</dbReference>
<dbReference type="GO" id="GO:0006397">
    <property type="term" value="P:mRNA processing"/>
    <property type="evidence" value="ECO:0007669"/>
    <property type="project" value="UniProtKB-KW"/>
</dbReference>
<dbReference type="GO" id="GO:0008380">
    <property type="term" value="P:RNA splicing"/>
    <property type="evidence" value="ECO:0007669"/>
    <property type="project" value="UniProtKB-UniRule"/>
</dbReference>
<dbReference type="GO" id="GO:0008033">
    <property type="term" value="P:tRNA processing"/>
    <property type="evidence" value="ECO:0007669"/>
    <property type="project" value="UniProtKB-KW"/>
</dbReference>
<dbReference type="HAMAP" id="MF_01390">
    <property type="entry name" value="MatK"/>
    <property type="match status" value="1"/>
</dbReference>
<dbReference type="InterPro" id="IPR024937">
    <property type="entry name" value="Domain_X"/>
</dbReference>
<dbReference type="InterPro" id="IPR002866">
    <property type="entry name" value="Maturase_MatK"/>
</dbReference>
<dbReference type="InterPro" id="IPR024942">
    <property type="entry name" value="Maturase_MatK_N"/>
</dbReference>
<dbReference type="PANTHER" id="PTHR34811">
    <property type="entry name" value="MATURASE K"/>
    <property type="match status" value="1"/>
</dbReference>
<dbReference type="PANTHER" id="PTHR34811:SF1">
    <property type="entry name" value="MATURASE K"/>
    <property type="match status" value="1"/>
</dbReference>
<dbReference type="Pfam" id="PF01348">
    <property type="entry name" value="Intron_maturas2"/>
    <property type="match status" value="1"/>
</dbReference>
<dbReference type="Pfam" id="PF01824">
    <property type="entry name" value="MatK_N"/>
    <property type="match status" value="1"/>
</dbReference>
<accession>Q95GJ0</accession>
<evidence type="ECO:0000255" key="1">
    <source>
        <dbReference type="HAMAP-Rule" id="MF_01390"/>
    </source>
</evidence>
<keyword id="KW-0150">Chloroplast</keyword>
<keyword id="KW-0507">mRNA processing</keyword>
<keyword id="KW-0934">Plastid</keyword>
<keyword id="KW-0694">RNA-binding</keyword>
<keyword id="KW-0819">tRNA processing</keyword>